<gene>
    <name evidence="1" type="primary">rplS</name>
    <name type="ordered locus">NTHI0298</name>
</gene>
<reference key="1">
    <citation type="journal article" date="2005" name="J. Bacteriol.">
        <title>Genomic sequence of an otitis media isolate of nontypeable Haemophilus influenzae: comparative study with H. influenzae serotype d, strain KW20.</title>
        <authorList>
            <person name="Harrison A."/>
            <person name="Dyer D.W."/>
            <person name="Gillaspy A."/>
            <person name="Ray W.C."/>
            <person name="Mungur R."/>
            <person name="Carson M.B."/>
            <person name="Zhong H."/>
            <person name="Gipson J."/>
            <person name="Gipson M."/>
            <person name="Johnson L.S."/>
            <person name="Lewis L."/>
            <person name="Bakaletz L.O."/>
            <person name="Munson R.S. Jr."/>
        </authorList>
    </citation>
    <scope>NUCLEOTIDE SEQUENCE [LARGE SCALE GENOMIC DNA]</scope>
    <source>
        <strain>86-028NP</strain>
    </source>
</reference>
<comment type="function">
    <text evidence="1">This protein is located at the 30S-50S ribosomal subunit interface and may play a role in the structure and function of the aminoacyl-tRNA binding site.</text>
</comment>
<comment type="similarity">
    <text evidence="1">Belongs to the bacterial ribosomal protein bL19 family.</text>
</comment>
<sequence length="116" mass="13070">MSNIIKQLEQEQLKQNVPSFRPGDTLEVKVWVVEGSKRRLQAFEGVVIAIRNRGLHSAFTLRKVSNGVGVERVFQTHSPAVDSIAVKRKGAVRKAKLYYLRERSGKSARIKERLGA</sequence>
<feature type="chain" id="PRO_0000226850" description="Large ribosomal subunit protein bL19">
    <location>
        <begin position="1"/>
        <end position="116"/>
    </location>
</feature>
<name>RL19_HAEI8</name>
<organism>
    <name type="scientific">Haemophilus influenzae (strain 86-028NP)</name>
    <dbReference type="NCBI Taxonomy" id="281310"/>
    <lineage>
        <taxon>Bacteria</taxon>
        <taxon>Pseudomonadati</taxon>
        <taxon>Pseudomonadota</taxon>
        <taxon>Gammaproteobacteria</taxon>
        <taxon>Pasteurellales</taxon>
        <taxon>Pasteurellaceae</taxon>
        <taxon>Haemophilus</taxon>
    </lineage>
</organism>
<dbReference type="EMBL" id="CP000057">
    <property type="protein sequence ID" value="AAX87258.1"/>
    <property type="molecule type" value="Genomic_DNA"/>
</dbReference>
<dbReference type="RefSeq" id="WP_005648735.1">
    <property type="nucleotide sequence ID" value="NC_007146.2"/>
</dbReference>
<dbReference type="SMR" id="Q4QNY9"/>
<dbReference type="GeneID" id="93219137"/>
<dbReference type="KEGG" id="hit:NTHI0298"/>
<dbReference type="HOGENOM" id="CLU_103507_2_2_6"/>
<dbReference type="Proteomes" id="UP000002525">
    <property type="component" value="Chromosome"/>
</dbReference>
<dbReference type="GO" id="GO:0022625">
    <property type="term" value="C:cytosolic large ribosomal subunit"/>
    <property type="evidence" value="ECO:0007669"/>
    <property type="project" value="TreeGrafter"/>
</dbReference>
<dbReference type="GO" id="GO:0003735">
    <property type="term" value="F:structural constituent of ribosome"/>
    <property type="evidence" value="ECO:0007669"/>
    <property type="project" value="InterPro"/>
</dbReference>
<dbReference type="GO" id="GO:0006412">
    <property type="term" value="P:translation"/>
    <property type="evidence" value="ECO:0007669"/>
    <property type="project" value="UniProtKB-UniRule"/>
</dbReference>
<dbReference type="FunFam" id="2.30.30.790:FF:000001">
    <property type="entry name" value="50S ribosomal protein L19"/>
    <property type="match status" value="1"/>
</dbReference>
<dbReference type="Gene3D" id="2.30.30.790">
    <property type="match status" value="1"/>
</dbReference>
<dbReference type="HAMAP" id="MF_00402">
    <property type="entry name" value="Ribosomal_bL19"/>
    <property type="match status" value="1"/>
</dbReference>
<dbReference type="InterPro" id="IPR001857">
    <property type="entry name" value="Ribosomal_bL19"/>
</dbReference>
<dbReference type="InterPro" id="IPR018257">
    <property type="entry name" value="Ribosomal_bL19_CS"/>
</dbReference>
<dbReference type="InterPro" id="IPR038657">
    <property type="entry name" value="Ribosomal_bL19_sf"/>
</dbReference>
<dbReference type="InterPro" id="IPR008991">
    <property type="entry name" value="Translation_prot_SH3-like_sf"/>
</dbReference>
<dbReference type="NCBIfam" id="TIGR01024">
    <property type="entry name" value="rplS_bact"/>
    <property type="match status" value="1"/>
</dbReference>
<dbReference type="PANTHER" id="PTHR15680:SF9">
    <property type="entry name" value="LARGE RIBOSOMAL SUBUNIT PROTEIN BL19M"/>
    <property type="match status" value="1"/>
</dbReference>
<dbReference type="PANTHER" id="PTHR15680">
    <property type="entry name" value="RIBOSOMAL PROTEIN L19"/>
    <property type="match status" value="1"/>
</dbReference>
<dbReference type="Pfam" id="PF01245">
    <property type="entry name" value="Ribosomal_L19"/>
    <property type="match status" value="1"/>
</dbReference>
<dbReference type="PIRSF" id="PIRSF002191">
    <property type="entry name" value="Ribosomal_L19"/>
    <property type="match status" value="1"/>
</dbReference>
<dbReference type="PRINTS" id="PR00061">
    <property type="entry name" value="RIBOSOMALL19"/>
</dbReference>
<dbReference type="SUPFAM" id="SSF50104">
    <property type="entry name" value="Translation proteins SH3-like domain"/>
    <property type="match status" value="1"/>
</dbReference>
<dbReference type="PROSITE" id="PS01015">
    <property type="entry name" value="RIBOSOMAL_L19"/>
    <property type="match status" value="1"/>
</dbReference>
<keyword id="KW-0687">Ribonucleoprotein</keyword>
<keyword id="KW-0689">Ribosomal protein</keyword>
<accession>Q4QNY9</accession>
<proteinExistence type="inferred from homology"/>
<evidence type="ECO:0000255" key="1">
    <source>
        <dbReference type="HAMAP-Rule" id="MF_00402"/>
    </source>
</evidence>
<evidence type="ECO:0000305" key="2"/>
<protein>
    <recommendedName>
        <fullName evidence="1">Large ribosomal subunit protein bL19</fullName>
    </recommendedName>
    <alternativeName>
        <fullName evidence="2">50S ribosomal protein L19</fullName>
    </alternativeName>
</protein>